<dbReference type="EMBL" id="X54870">
    <property type="protein sequence ID" value="CAA38652.1"/>
    <property type="molecule type" value="mRNA"/>
</dbReference>
<dbReference type="EMBL" id="AJ001687">
    <property type="protein sequence ID" value="CAA04925.1"/>
    <property type="molecule type" value="Genomic_DNA"/>
</dbReference>
<dbReference type="EMBL" id="AJ001688">
    <property type="protein sequence ID" value="CAA04925.1"/>
    <property type="status" value="JOINED"/>
    <property type="molecule type" value="Genomic_DNA"/>
</dbReference>
<dbReference type="EMBL" id="AJ001689">
    <property type="protein sequence ID" value="CAA04925.1"/>
    <property type="status" value="JOINED"/>
    <property type="molecule type" value="Genomic_DNA"/>
</dbReference>
<dbReference type="EMBL" id="AF461811">
    <property type="protein sequence ID" value="AAL65233.1"/>
    <property type="molecule type" value="mRNA"/>
</dbReference>
<dbReference type="EMBL" id="AF260135">
    <property type="protein sequence ID" value="AAF86973.1"/>
    <property type="molecule type" value="mRNA"/>
</dbReference>
<dbReference type="EMBL" id="AF260136">
    <property type="protein sequence ID" value="AAF86974.1"/>
    <property type="molecule type" value="mRNA"/>
</dbReference>
<dbReference type="EMBL" id="AK292059">
    <property type="protein sequence ID" value="BAF84748.1"/>
    <property type="molecule type" value="mRNA"/>
</dbReference>
<dbReference type="EMBL" id="AK292020">
    <property type="protein sequence ID" value="BAF84709.1"/>
    <property type="molecule type" value="mRNA"/>
</dbReference>
<dbReference type="EMBL" id="AC022075">
    <property type="status" value="NOT_ANNOTATED_CDS"/>
    <property type="molecule type" value="Genomic_DNA"/>
</dbReference>
<dbReference type="EMBL" id="CH471094">
    <property type="protein sequence ID" value="EAW96178.1"/>
    <property type="molecule type" value="Genomic_DNA"/>
</dbReference>
<dbReference type="EMBL" id="BC039836">
    <property type="protein sequence ID" value="AAH39836.1"/>
    <property type="molecule type" value="mRNA"/>
</dbReference>
<dbReference type="PIR" id="PT0375">
    <property type="entry name" value="PT0375"/>
</dbReference>
<dbReference type="RefSeq" id="NP_001186734.1">
    <molecule id="P26718-1"/>
    <property type="nucleotide sequence ID" value="NM_001199805.1"/>
</dbReference>
<dbReference type="RefSeq" id="NP_031386.2">
    <molecule id="P26718-1"/>
    <property type="nucleotide sequence ID" value="NM_007360.4"/>
</dbReference>
<dbReference type="PDB" id="1HYR">
    <property type="method" value="X-ray"/>
    <property type="resolution" value="2.70 A"/>
    <property type="chains" value="A/B=80-216"/>
</dbReference>
<dbReference type="PDB" id="1KCG">
    <property type="method" value="X-ray"/>
    <property type="resolution" value="2.60 A"/>
    <property type="chains" value="A/B=93-216"/>
</dbReference>
<dbReference type="PDB" id="1MPU">
    <property type="method" value="X-ray"/>
    <property type="resolution" value="2.50 A"/>
    <property type="chains" value="A=80-216"/>
</dbReference>
<dbReference type="PDB" id="4PDC">
    <property type="method" value="X-ray"/>
    <property type="resolution" value="1.99 A"/>
    <property type="chains" value="A/B/C/D=93-215"/>
</dbReference>
<dbReference type="PDB" id="4S0U">
    <property type="method" value="X-ray"/>
    <property type="resolution" value="2.35 A"/>
    <property type="chains" value="A/B=90-215"/>
</dbReference>
<dbReference type="PDB" id="8TM0">
    <property type="method" value="X-ray"/>
    <property type="resolution" value="3.83 A"/>
    <property type="chains" value="A=84-216"/>
</dbReference>
<dbReference type="PDB" id="8TM2">
    <property type="method" value="X-ray"/>
    <property type="resolution" value="2.85 A"/>
    <property type="chains" value="A=84-216"/>
</dbReference>
<dbReference type="PDB" id="9DH2">
    <property type="method" value="X-ray"/>
    <property type="resolution" value="2.98 A"/>
    <property type="chains" value="M/R/S/T=80-216"/>
</dbReference>
<dbReference type="PDBsum" id="1HYR"/>
<dbReference type="PDBsum" id="1KCG"/>
<dbReference type="PDBsum" id="1MPU"/>
<dbReference type="PDBsum" id="4PDC"/>
<dbReference type="PDBsum" id="4S0U"/>
<dbReference type="PDBsum" id="8TM0"/>
<dbReference type="PDBsum" id="8TM2"/>
<dbReference type="PDBsum" id="9DH2"/>
<dbReference type="SMR" id="P26718"/>
<dbReference type="BioGRID" id="116576">
    <property type="interactions" value="39"/>
</dbReference>
<dbReference type="CORUM" id="P26718"/>
<dbReference type="DIP" id="DIP-31100N"/>
<dbReference type="FunCoup" id="P26718">
    <property type="interactions" value="230"/>
</dbReference>
<dbReference type="IntAct" id="P26718">
    <property type="interactions" value="27"/>
</dbReference>
<dbReference type="MINT" id="P26718"/>
<dbReference type="STRING" id="9606.ENSP00000240618"/>
<dbReference type="BindingDB" id="P26718"/>
<dbReference type="ChEMBL" id="CHEMBL5483005"/>
<dbReference type="ChEMBL" id="CHEMBL5483006"/>
<dbReference type="TCDB" id="1.C.111.1.13">
    <property type="family name" value="the regiiiGama (regiiiGama) family"/>
</dbReference>
<dbReference type="UniLectin" id="P26718"/>
<dbReference type="GlyCosmos" id="P26718">
    <property type="glycosylation" value="3 sites, No reported glycans"/>
</dbReference>
<dbReference type="GlyGen" id="P26718">
    <property type="glycosylation" value="3 sites"/>
</dbReference>
<dbReference type="iPTMnet" id="P26718"/>
<dbReference type="PhosphoSitePlus" id="P26718"/>
<dbReference type="BioMuta" id="KLRK1"/>
<dbReference type="DMDM" id="128370"/>
<dbReference type="MassIVE" id="P26718"/>
<dbReference type="PaxDb" id="9606-ENSP00000240618"/>
<dbReference type="PeptideAtlas" id="P26718"/>
<dbReference type="ProteomicsDB" id="54365">
    <molecule id="P26718-1"/>
</dbReference>
<dbReference type="ABCD" id="P26718">
    <property type="antibodies" value="36 sequenced antibodies"/>
</dbReference>
<dbReference type="Antibodypedia" id="23295">
    <property type="antibodies" value="767 antibodies from 38 providers"/>
</dbReference>
<dbReference type="DNASU" id="22914"/>
<dbReference type="Ensembl" id="ENST00000240618.11">
    <molecule id="P26718-1"/>
    <property type="protein sequence ID" value="ENSP00000240618.6"/>
    <property type="gene ID" value="ENSG00000213809.9"/>
</dbReference>
<dbReference type="Ensembl" id="ENST00000540818.5">
    <molecule id="P26718-1"/>
    <property type="protein sequence ID" value="ENSP00000446003.1"/>
    <property type="gene ID" value="ENSG00000213809.9"/>
</dbReference>
<dbReference type="GeneID" id="22914"/>
<dbReference type="KEGG" id="hsa:100528032"/>
<dbReference type="KEGG" id="hsa:22914"/>
<dbReference type="MANE-Select" id="ENST00000240618.11">
    <property type="protein sequence ID" value="ENSP00000240618.6"/>
    <property type="RefSeq nucleotide sequence ID" value="NM_007360.4"/>
    <property type="RefSeq protein sequence ID" value="NP_031386.2"/>
</dbReference>
<dbReference type="UCSC" id="uc009zhj.4">
    <molecule id="P26718-1"/>
    <property type="organism name" value="human"/>
</dbReference>
<dbReference type="AGR" id="HGNC:18788"/>
<dbReference type="AGR" id="HGNC:48357"/>
<dbReference type="CTD" id="100528032"/>
<dbReference type="CTD" id="22914"/>
<dbReference type="DisGeNET" id="100528032"/>
<dbReference type="DisGeNET" id="22914"/>
<dbReference type="GeneCards" id="KLRK1"/>
<dbReference type="HGNC" id="HGNC:18788">
    <property type="gene designation" value="KLRK1"/>
</dbReference>
<dbReference type="HPA" id="ENSG00000213809">
    <property type="expression patterns" value="Tissue enhanced (bone marrow, lymphoid tissue)"/>
</dbReference>
<dbReference type="MIM" id="611817">
    <property type="type" value="gene"/>
</dbReference>
<dbReference type="neXtProt" id="NX_P26718"/>
<dbReference type="OpenTargets" id="ENSG00000213809"/>
<dbReference type="PharmGKB" id="PA128394594"/>
<dbReference type="VEuPathDB" id="HostDB:ENSG00000213809"/>
<dbReference type="eggNOG" id="KOG4297">
    <property type="taxonomic scope" value="Eukaryota"/>
</dbReference>
<dbReference type="GeneTree" id="ENSGT00940000154558"/>
<dbReference type="HOGENOM" id="CLU_049894_9_1_1"/>
<dbReference type="InParanoid" id="P26718"/>
<dbReference type="OMA" id="DRWAHHS"/>
<dbReference type="OrthoDB" id="2142683at2759"/>
<dbReference type="PAN-GO" id="P26718">
    <property type="GO annotations" value="3 GO annotations based on evolutionary models"/>
</dbReference>
<dbReference type="PhylomeDB" id="P26718"/>
<dbReference type="TreeFam" id="TF336674"/>
<dbReference type="PathwayCommons" id="P26718"/>
<dbReference type="Reactome" id="R-HSA-198933">
    <property type="pathway name" value="Immunoregulatory interactions between a Lymphoid and a non-Lymphoid cell"/>
</dbReference>
<dbReference type="Reactome" id="R-HSA-2172127">
    <property type="pathway name" value="DAP12 interactions"/>
</dbReference>
<dbReference type="Reactome" id="R-HSA-2424491">
    <property type="pathway name" value="DAP12 signaling"/>
</dbReference>
<dbReference type="SignaLink" id="P26718"/>
<dbReference type="SIGNOR" id="P26718"/>
<dbReference type="BioGRID-ORCS" id="100528032">
    <property type="hits" value="10 hits in 228 CRISPR screens"/>
</dbReference>
<dbReference type="BioGRID-ORCS" id="22914">
    <property type="hits" value="8 hits in 1143 CRISPR screens"/>
</dbReference>
<dbReference type="EvolutionaryTrace" id="P26718"/>
<dbReference type="GeneWiki" id="KLRK1"/>
<dbReference type="Pharos" id="P26718">
    <property type="development level" value="Tbio"/>
</dbReference>
<dbReference type="PRO" id="PR:P26718"/>
<dbReference type="Proteomes" id="UP000005640">
    <property type="component" value="Chromosome 12"/>
</dbReference>
<dbReference type="RNAct" id="P26718">
    <property type="molecule type" value="protein"/>
</dbReference>
<dbReference type="Bgee" id="ENSG00000213809">
    <property type="expression patterns" value="Expressed in granulocyte and 93 other cell types or tissues"/>
</dbReference>
<dbReference type="ExpressionAtlas" id="P26718">
    <property type="expression patterns" value="baseline and differential"/>
</dbReference>
<dbReference type="GO" id="GO:0009986">
    <property type="term" value="C:cell surface"/>
    <property type="evidence" value="ECO:0000314"/>
    <property type="project" value="UniProtKB"/>
</dbReference>
<dbReference type="GO" id="GO:0009897">
    <property type="term" value="C:external side of plasma membrane"/>
    <property type="evidence" value="ECO:0000318"/>
    <property type="project" value="GO_Central"/>
</dbReference>
<dbReference type="GO" id="GO:0016020">
    <property type="term" value="C:membrane"/>
    <property type="evidence" value="ECO:0000304"/>
    <property type="project" value="ProtInc"/>
</dbReference>
<dbReference type="GO" id="GO:0005886">
    <property type="term" value="C:plasma membrane"/>
    <property type="evidence" value="ECO:0000314"/>
    <property type="project" value="HPA"/>
</dbReference>
<dbReference type="GO" id="GO:0030246">
    <property type="term" value="F:carbohydrate binding"/>
    <property type="evidence" value="ECO:0007669"/>
    <property type="project" value="UniProtKB-KW"/>
</dbReference>
<dbReference type="GO" id="GO:0042802">
    <property type="term" value="F:identical protein binding"/>
    <property type="evidence" value="ECO:0007669"/>
    <property type="project" value="Ensembl"/>
</dbReference>
<dbReference type="GO" id="GO:0042288">
    <property type="term" value="F:MHC class I protein binding"/>
    <property type="evidence" value="ECO:0007669"/>
    <property type="project" value="Ensembl"/>
</dbReference>
<dbReference type="GO" id="GO:0032394">
    <property type="term" value="F:MHC class Ib receptor activity"/>
    <property type="evidence" value="ECO:0007669"/>
    <property type="project" value="Ensembl"/>
</dbReference>
<dbReference type="GO" id="GO:0038023">
    <property type="term" value="F:signaling receptor activity"/>
    <property type="evidence" value="ECO:0000314"/>
    <property type="project" value="UniProtKB"/>
</dbReference>
<dbReference type="GO" id="GO:0002250">
    <property type="term" value="P:adaptive immune response"/>
    <property type="evidence" value="ECO:0007669"/>
    <property type="project" value="UniProtKB-KW"/>
</dbReference>
<dbReference type="GO" id="GO:0030154">
    <property type="term" value="P:cell differentiation"/>
    <property type="evidence" value="ECO:0007669"/>
    <property type="project" value="UniProtKB-KW"/>
</dbReference>
<dbReference type="GO" id="GO:0071222">
    <property type="term" value="P:cellular response to lipopolysaccharide"/>
    <property type="evidence" value="ECO:0007669"/>
    <property type="project" value="Ensembl"/>
</dbReference>
<dbReference type="GO" id="GO:0050830">
    <property type="term" value="P:defense response to Gram-positive bacterium"/>
    <property type="evidence" value="ECO:0007669"/>
    <property type="project" value="Ensembl"/>
</dbReference>
<dbReference type="GO" id="GO:0030101">
    <property type="term" value="P:natural killer cell activation"/>
    <property type="evidence" value="ECO:0000304"/>
    <property type="project" value="BHF-UCL"/>
</dbReference>
<dbReference type="GO" id="GO:0042267">
    <property type="term" value="P:natural killer cell mediated cytotoxicity"/>
    <property type="evidence" value="ECO:0000314"/>
    <property type="project" value="UniProtKB"/>
</dbReference>
<dbReference type="GO" id="GO:0034260">
    <property type="term" value="P:negative regulation of GTPase activity"/>
    <property type="evidence" value="ECO:0000314"/>
    <property type="project" value="CACAO"/>
</dbReference>
<dbReference type="GO" id="GO:2000502">
    <property type="term" value="P:negative regulation of natural killer cell chemotaxis"/>
    <property type="evidence" value="ECO:0000314"/>
    <property type="project" value="CACAO"/>
</dbReference>
<dbReference type="GO" id="GO:0006809">
    <property type="term" value="P:nitric oxide biosynthetic process"/>
    <property type="evidence" value="ECO:0007669"/>
    <property type="project" value="Ensembl"/>
</dbReference>
<dbReference type="GO" id="GO:0045954">
    <property type="term" value="P:positive regulation of natural killer cell mediated cytotoxicity"/>
    <property type="evidence" value="ECO:0000314"/>
    <property type="project" value="UniProtKB"/>
</dbReference>
<dbReference type="GO" id="GO:0045429">
    <property type="term" value="P:positive regulation of nitric oxide biosynthetic process"/>
    <property type="evidence" value="ECO:0007669"/>
    <property type="project" value="Ensembl"/>
</dbReference>
<dbReference type="GO" id="GO:0032729">
    <property type="term" value="P:positive regulation of type II interferon production"/>
    <property type="evidence" value="ECO:0007669"/>
    <property type="project" value="Ensembl"/>
</dbReference>
<dbReference type="GO" id="GO:0007165">
    <property type="term" value="P:signal transduction"/>
    <property type="evidence" value="ECO:0000304"/>
    <property type="project" value="ProtInc"/>
</dbReference>
<dbReference type="GO" id="GO:0002223">
    <property type="term" value="P:stimulatory C-type lectin receptor signaling pathway"/>
    <property type="evidence" value="ECO:0007669"/>
    <property type="project" value="Ensembl"/>
</dbReference>
<dbReference type="GO" id="GO:0031295">
    <property type="term" value="P:T cell costimulation"/>
    <property type="evidence" value="ECO:0000304"/>
    <property type="project" value="BHF-UCL"/>
</dbReference>
<dbReference type="CDD" id="cd03593">
    <property type="entry name" value="CLECT_NK_receptors_like"/>
    <property type="match status" value="1"/>
</dbReference>
<dbReference type="FunFam" id="3.10.100.10:FF:000055">
    <property type="entry name" value="NKG2-D type II integral membrane protein"/>
    <property type="match status" value="1"/>
</dbReference>
<dbReference type="Gene3D" id="3.10.100.10">
    <property type="entry name" value="Mannose-Binding Protein A, subunit A"/>
    <property type="match status" value="1"/>
</dbReference>
<dbReference type="InterPro" id="IPR001304">
    <property type="entry name" value="C-type_lectin-like"/>
</dbReference>
<dbReference type="InterPro" id="IPR016186">
    <property type="entry name" value="C-type_lectin-like/link_sf"/>
</dbReference>
<dbReference type="InterPro" id="IPR016187">
    <property type="entry name" value="CTDL_fold"/>
</dbReference>
<dbReference type="InterPro" id="IPR042169">
    <property type="entry name" value="NKG2D"/>
</dbReference>
<dbReference type="InterPro" id="IPR033992">
    <property type="entry name" value="NKR-like_CTLD"/>
</dbReference>
<dbReference type="PANTHER" id="PTHR47494">
    <property type="entry name" value="NKG2-D TYPE II INTEGRAL MEMBRANE PROTEIN"/>
    <property type="match status" value="1"/>
</dbReference>
<dbReference type="PANTHER" id="PTHR47494:SF1">
    <property type="entry name" value="NKG2-D TYPE II INTEGRAL MEMBRANE PROTEIN"/>
    <property type="match status" value="1"/>
</dbReference>
<dbReference type="Pfam" id="PF00059">
    <property type="entry name" value="Lectin_C"/>
    <property type="match status" value="1"/>
</dbReference>
<dbReference type="SMART" id="SM00034">
    <property type="entry name" value="CLECT"/>
    <property type="match status" value="1"/>
</dbReference>
<dbReference type="SUPFAM" id="SSF56436">
    <property type="entry name" value="C-type lectin-like"/>
    <property type="match status" value="1"/>
</dbReference>
<dbReference type="PROSITE" id="PS50041">
    <property type="entry name" value="C_TYPE_LECTIN_2"/>
    <property type="match status" value="1"/>
</dbReference>
<name>NKG2D_HUMAN</name>
<gene>
    <name type="primary">KLRK1</name>
    <name type="synonym">D12S2489E</name>
    <name type="synonym">NKG2D</name>
</gene>
<organism>
    <name type="scientific">Homo sapiens</name>
    <name type="common">Human</name>
    <dbReference type="NCBI Taxonomy" id="9606"/>
    <lineage>
        <taxon>Eukaryota</taxon>
        <taxon>Metazoa</taxon>
        <taxon>Chordata</taxon>
        <taxon>Craniata</taxon>
        <taxon>Vertebrata</taxon>
        <taxon>Euteleostomi</taxon>
        <taxon>Mammalia</taxon>
        <taxon>Eutheria</taxon>
        <taxon>Euarchontoglires</taxon>
        <taxon>Primates</taxon>
        <taxon>Haplorrhini</taxon>
        <taxon>Catarrhini</taxon>
        <taxon>Hominidae</taxon>
        <taxon>Homo</taxon>
    </lineage>
</organism>
<accession>P26718</accession>
<accession>A8K7K5</accession>
<accession>A8K7P4</accession>
<accession>Q9NR41</accession>
<proteinExistence type="evidence at protein level"/>
<reference key="1">
    <citation type="journal article" date="1991" name="J. Exp. Med.">
        <title>DNA sequence analysis of NKG2, a family of related cDNA clones encoding type II integral membrane proteins on human natural killer cells.</title>
        <authorList>
            <person name="Houchins J.P."/>
            <person name="Yabe T."/>
            <person name="McSherry C."/>
            <person name="Bach F.H."/>
        </authorList>
    </citation>
    <scope>NUCLEOTIDE SEQUENCE [MRNA] (ISOFORM 1)</scope>
    <scope>VARIANT ALA-72</scope>
</reference>
<reference key="2">
    <citation type="journal article" date="1998" name="Immunogenetics">
        <title>The genomic organization of NKG2C, E, F, and D receptor genes in the human natural killer gene complex.</title>
        <authorList>
            <person name="Glienke J."/>
            <person name="Sobanov Y."/>
            <person name="Brostjan C."/>
            <person name="Steffens C."/>
            <person name="Nguyen C."/>
            <person name="Lehrach H."/>
            <person name="Hofer E."/>
            <person name="Francis F."/>
        </authorList>
    </citation>
    <scope>NUCLEOTIDE SEQUENCE [GENOMIC DNA]</scope>
    <scope>VARIANT ALA-72</scope>
</reference>
<reference key="3">
    <citation type="submission" date="2001-12" db="EMBL/GenBank/DDBJ databases">
        <title>Identification and characterization of the NKG2D gene from large granular lymphocytic leukemia (LGL) cells.</title>
        <authorList>
            <person name="Kothapalli R."/>
            <person name="Kusmartseva I."/>
            <person name="Loughran T.P. Jr."/>
        </authorList>
    </citation>
    <scope>NUCLEOTIDE SEQUENCE [MRNA] (ISOFORM 1)</scope>
    <scope>VARIANT ALA-72</scope>
</reference>
<reference key="4">
    <citation type="journal article" date="2002" name="J. Immunol.">
        <title>Conservation and variation in human and common chimpanzee CD94 and NKG2 genes.</title>
        <authorList>
            <person name="Shum B.P."/>
            <person name="Flodin L.R."/>
            <person name="Muir D.G."/>
            <person name="Rajalingam R."/>
            <person name="Khakoo S.I."/>
            <person name="Cleland S."/>
            <person name="Guethlein L.A."/>
            <person name="Uhrberg M."/>
            <person name="Parham P."/>
        </authorList>
    </citation>
    <scope>NUCLEOTIDE SEQUENCE [MRNA] (ISOFORM 1)</scope>
    <scope>VARIANT ALA-72</scope>
</reference>
<reference key="5">
    <citation type="journal article" date="2004" name="Nat. Genet.">
        <title>Complete sequencing and characterization of 21,243 full-length human cDNAs.</title>
        <authorList>
            <person name="Ota T."/>
            <person name="Suzuki Y."/>
            <person name="Nishikawa T."/>
            <person name="Otsuki T."/>
            <person name="Sugiyama T."/>
            <person name="Irie R."/>
            <person name="Wakamatsu A."/>
            <person name="Hayashi K."/>
            <person name="Sato H."/>
            <person name="Nagai K."/>
            <person name="Kimura K."/>
            <person name="Makita H."/>
            <person name="Sekine M."/>
            <person name="Obayashi M."/>
            <person name="Nishi T."/>
            <person name="Shibahara T."/>
            <person name="Tanaka T."/>
            <person name="Ishii S."/>
            <person name="Yamamoto J."/>
            <person name="Saito K."/>
            <person name="Kawai Y."/>
            <person name="Isono Y."/>
            <person name="Nakamura Y."/>
            <person name="Nagahari K."/>
            <person name="Murakami K."/>
            <person name="Yasuda T."/>
            <person name="Iwayanagi T."/>
            <person name="Wagatsuma M."/>
            <person name="Shiratori A."/>
            <person name="Sudo H."/>
            <person name="Hosoiri T."/>
            <person name="Kaku Y."/>
            <person name="Kodaira H."/>
            <person name="Kondo H."/>
            <person name="Sugawara M."/>
            <person name="Takahashi M."/>
            <person name="Kanda K."/>
            <person name="Yokoi T."/>
            <person name="Furuya T."/>
            <person name="Kikkawa E."/>
            <person name="Omura Y."/>
            <person name="Abe K."/>
            <person name="Kamihara K."/>
            <person name="Katsuta N."/>
            <person name="Sato K."/>
            <person name="Tanikawa M."/>
            <person name="Yamazaki M."/>
            <person name="Ninomiya K."/>
            <person name="Ishibashi T."/>
            <person name="Yamashita H."/>
            <person name="Murakawa K."/>
            <person name="Fujimori K."/>
            <person name="Tanai H."/>
            <person name="Kimata M."/>
            <person name="Watanabe M."/>
            <person name="Hiraoka S."/>
            <person name="Chiba Y."/>
            <person name="Ishida S."/>
            <person name="Ono Y."/>
            <person name="Takiguchi S."/>
            <person name="Watanabe S."/>
            <person name="Yosida M."/>
            <person name="Hotuta T."/>
            <person name="Kusano J."/>
            <person name="Kanehori K."/>
            <person name="Takahashi-Fujii A."/>
            <person name="Hara H."/>
            <person name="Tanase T.-O."/>
            <person name="Nomura Y."/>
            <person name="Togiya S."/>
            <person name="Komai F."/>
            <person name="Hara R."/>
            <person name="Takeuchi K."/>
            <person name="Arita M."/>
            <person name="Imose N."/>
            <person name="Musashino K."/>
            <person name="Yuuki H."/>
            <person name="Oshima A."/>
            <person name="Sasaki N."/>
            <person name="Aotsuka S."/>
            <person name="Yoshikawa Y."/>
            <person name="Matsunawa H."/>
            <person name="Ichihara T."/>
            <person name="Shiohata N."/>
            <person name="Sano S."/>
            <person name="Moriya S."/>
            <person name="Momiyama H."/>
            <person name="Satoh N."/>
            <person name="Takami S."/>
            <person name="Terashima Y."/>
            <person name="Suzuki O."/>
            <person name="Nakagawa S."/>
            <person name="Senoh A."/>
            <person name="Mizoguchi H."/>
            <person name="Goto Y."/>
            <person name="Shimizu F."/>
            <person name="Wakebe H."/>
            <person name="Hishigaki H."/>
            <person name="Watanabe T."/>
            <person name="Sugiyama A."/>
            <person name="Takemoto M."/>
            <person name="Kawakami B."/>
            <person name="Yamazaki M."/>
            <person name="Watanabe K."/>
            <person name="Kumagai A."/>
            <person name="Itakura S."/>
            <person name="Fukuzumi Y."/>
            <person name="Fujimori Y."/>
            <person name="Komiyama M."/>
            <person name="Tashiro H."/>
            <person name="Tanigami A."/>
            <person name="Fujiwara T."/>
            <person name="Ono T."/>
            <person name="Yamada K."/>
            <person name="Fujii Y."/>
            <person name="Ozaki K."/>
            <person name="Hirao M."/>
            <person name="Ohmori Y."/>
            <person name="Kawabata A."/>
            <person name="Hikiji T."/>
            <person name="Kobatake N."/>
            <person name="Inagaki H."/>
            <person name="Ikema Y."/>
            <person name="Okamoto S."/>
            <person name="Okitani R."/>
            <person name="Kawakami T."/>
            <person name="Noguchi S."/>
            <person name="Itoh T."/>
            <person name="Shigeta K."/>
            <person name="Senba T."/>
            <person name="Matsumura K."/>
            <person name="Nakajima Y."/>
            <person name="Mizuno T."/>
            <person name="Morinaga M."/>
            <person name="Sasaki M."/>
            <person name="Togashi T."/>
            <person name="Oyama M."/>
            <person name="Hata H."/>
            <person name="Watanabe M."/>
            <person name="Komatsu T."/>
            <person name="Mizushima-Sugano J."/>
            <person name="Satoh T."/>
            <person name="Shirai Y."/>
            <person name="Takahashi Y."/>
            <person name="Nakagawa K."/>
            <person name="Okumura K."/>
            <person name="Nagase T."/>
            <person name="Nomura N."/>
            <person name="Kikuchi H."/>
            <person name="Masuho Y."/>
            <person name="Yamashita R."/>
            <person name="Nakai K."/>
            <person name="Yada T."/>
            <person name="Nakamura Y."/>
            <person name="Ohara O."/>
            <person name="Isogai T."/>
            <person name="Sugano S."/>
        </authorList>
    </citation>
    <scope>NUCLEOTIDE SEQUENCE [LARGE SCALE MRNA]</scope>
    <source>
        <tissue>Spleen</tissue>
        <tissue>Stomach</tissue>
    </source>
</reference>
<reference key="6">
    <citation type="journal article" date="2006" name="Nature">
        <title>The finished DNA sequence of human chromosome 12.</title>
        <authorList>
            <person name="Scherer S.E."/>
            <person name="Muzny D.M."/>
            <person name="Buhay C.J."/>
            <person name="Chen R."/>
            <person name="Cree A."/>
            <person name="Ding Y."/>
            <person name="Dugan-Rocha S."/>
            <person name="Gill R."/>
            <person name="Gunaratne P."/>
            <person name="Harris R.A."/>
            <person name="Hawes A.C."/>
            <person name="Hernandez J."/>
            <person name="Hodgson A.V."/>
            <person name="Hume J."/>
            <person name="Jackson A."/>
            <person name="Khan Z.M."/>
            <person name="Kovar-Smith C."/>
            <person name="Lewis L.R."/>
            <person name="Lozado R.J."/>
            <person name="Metzker M.L."/>
            <person name="Milosavljevic A."/>
            <person name="Miner G.R."/>
            <person name="Montgomery K.T."/>
            <person name="Morgan M.B."/>
            <person name="Nazareth L.V."/>
            <person name="Scott G."/>
            <person name="Sodergren E."/>
            <person name="Song X.-Z."/>
            <person name="Steffen D."/>
            <person name="Lovering R.C."/>
            <person name="Wheeler D.A."/>
            <person name="Worley K.C."/>
            <person name="Yuan Y."/>
            <person name="Zhang Z."/>
            <person name="Adams C.Q."/>
            <person name="Ansari-Lari M.A."/>
            <person name="Ayele M."/>
            <person name="Brown M.J."/>
            <person name="Chen G."/>
            <person name="Chen Z."/>
            <person name="Clerc-Blankenburg K.P."/>
            <person name="Davis C."/>
            <person name="Delgado O."/>
            <person name="Dinh H.H."/>
            <person name="Draper H."/>
            <person name="Gonzalez-Garay M.L."/>
            <person name="Havlak P."/>
            <person name="Jackson L.R."/>
            <person name="Jacob L.S."/>
            <person name="Kelly S.H."/>
            <person name="Li L."/>
            <person name="Li Z."/>
            <person name="Liu J."/>
            <person name="Liu W."/>
            <person name="Lu J."/>
            <person name="Maheshwari M."/>
            <person name="Nguyen B.-V."/>
            <person name="Okwuonu G.O."/>
            <person name="Pasternak S."/>
            <person name="Perez L.M."/>
            <person name="Plopper F.J.H."/>
            <person name="Santibanez J."/>
            <person name="Shen H."/>
            <person name="Tabor P.E."/>
            <person name="Verduzco D."/>
            <person name="Waldron L."/>
            <person name="Wang Q."/>
            <person name="Williams G.A."/>
            <person name="Zhang J."/>
            <person name="Zhou J."/>
            <person name="Allen C.C."/>
            <person name="Amin A.G."/>
            <person name="Anyalebechi V."/>
            <person name="Bailey M."/>
            <person name="Barbaria J.A."/>
            <person name="Bimage K.E."/>
            <person name="Bryant N.P."/>
            <person name="Burch P.E."/>
            <person name="Burkett C.E."/>
            <person name="Burrell K.L."/>
            <person name="Calderon E."/>
            <person name="Cardenas V."/>
            <person name="Carter K."/>
            <person name="Casias K."/>
            <person name="Cavazos I."/>
            <person name="Cavazos S.R."/>
            <person name="Ceasar H."/>
            <person name="Chacko J."/>
            <person name="Chan S.N."/>
            <person name="Chavez D."/>
            <person name="Christopoulos C."/>
            <person name="Chu J."/>
            <person name="Cockrell R."/>
            <person name="Cox C.D."/>
            <person name="Dang M."/>
            <person name="Dathorne S.R."/>
            <person name="David R."/>
            <person name="Davis C.M."/>
            <person name="Davy-Carroll L."/>
            <person name="Deshazo D.R."/>
            <person name="Donlin J.E."/>
            <person name="D'Souza L."/>
            <person name="Eaves K.A."/>
            <person name="Egan A."/>
            <person name="Emery-Cohen A.J."/>
            <person name="Escotto M."/>
            <person name="Flagg N."/>
            <person name="Forbes L.D."/>
            <person name="Gabisi A.M."/>
            <person name="Garza M."/>
            <person name="Hamilton C."/>
            <person name="Henderson N."/>
            <person name="Hernandez O."/>
            <person name="Hines S."/>
            <person name="Hogues M.E."/>
            <person name="Huang M."/>
            <person name="Idlebird D.G."/>
            <person name="Johnson R."/>
            <person name="Jolivet A."/>
            <person name="Jones S."/>
            <person name="Kagan R."/>
            <person name="King L.M."/>
            <person name="Leal B."/>
            <person name="Lebow H."/>
            <person name="Lee S."/>
            <person name="LeVan J.M."/>
            <person name="Lewis L.C."/>
            <person name="London P."/>
            <person name="Lorensuhewa L.M."/>
            <person name="Loulseged H."/>
            <person name="Lovett D.A."/>
            <person name="Lucier A."/>
            <person name="Lucier R.L."/>
            <person name="Ma J."/>
            <person name="Madu R.C."/>
            <person name="Mapua P."/>
            <person name="Martindale A.D."/>
            <person name="Martinez E."/>
            <person name="Massey E."/>
            <person name="Mawhiney S."/>
            <person name="Meador M.G."/>
            <person name="Mendez S."/>
            <person name="Mercado C."/>
            <person name="Mercado I.C."/>
            <person name="Merritt C.E."/>
            <person name="Miner Z.L."/>
            <person name="Minja E."/>
            <person name="Mitchell T."/>
            <person name="Mohabbat F."/>
            <person name="Mohabbat K."/>
            <person name="Montgomery B."/>
            <person name="Moore N."/>
            <person name="Morris S."/>
            <person name="Munidasa M."/>
            <person name="Ngo R.N."/>
            <person name="Nguyen N.B."/>
            <person name="Nickerson E."/>
            <person name="Nwaokelemeh O.O."/>
            <person name="Nwokenkwo S."/>
            <person name="Obregon M."/>
            <person name="Oguh M."/>
            <person name="Oragunye N."/>
            <person name="Oviedo R.J."/>
            <person name="Parish B.J."/>
            <person name="Parker D.N."/>
            <person name="Parrish J."/>
            <person name="Parks K.L."/>
            <person name="Paul H.A."/>
            <person name="Payton B.A."/>
            <person name="Perez A."/>
            <person name="Perrin W."/>
            <person name="Pickens A."/>
            <person name="Primus E.L."/>
            <person name="Pu L.-L."/>
            <person name="Puazo M."/>
            <person name="Quiles M.M."/>
            <person name="Quiroz J.B."/>
            <person name="Rabata D."/>
            <person name="Reeves K."/>
            <person name="Ruiz S.J."/>
            <person name="Shao H."/>
            <person name="Sisson I."/>
            <person name="Sonaike T."/>
            <person name="Sorelle R.P."/>
            <person name="Sutton A.E."/>
            <person name="Svatek A.F."/>
            <person name="Svetz L.A."/>
            <person name="Tamerisa K.S."/>
            <person name="Taylor T.R."/>
            <person name="Teague B."/>
            <person name="Thomas N."/>
            <person name="Thorn R.D."/>
            <person name="Trejos Z.Y."/>
            <person name="Trevino B.K."/>
            <person name="Ukegbu O.N."/>
            <person name="Urban J.B."/>
            <person name="Vasquez L.I."/>
            <person name="Vera V.A."/>
            <person name="Villasana D.M."/>
            <person name="Wang L."/>
            <person name="Ward-Moore S."/>
            <person name="Warren J.T."/>
            <person name="Wei X."/>
            <person name="White F."/>
            <person name="Williamson A.L."/>
            <person name="Wleczyk R."/>
            <person name="Wooden H.S."/>
            <person name="Wooden S.H."/>
            <person name="Yen J."/>
            <person name="Yoon L."/>
            <person name="Yoon V."/>
            <person name="Zorrilla S.E."/>
            <person name="Nelson D."/>
            <person name="Kucherlapati R."/>
            <person name="Weinstock G."/>
            <person name="Gibbs R.A."/>
        </authorList>
    </citation>
    <scope>NUCLEOTIDE SEQUENCE [LARGE SCALE GENOMIC DNA]</scope>
</reference>
<reference key="7">
    <citation type="submission" date="2005-07" db="EMBL/GenBank/DDBJ databases">
        <authorList>
            <person name="Mural R.J."/>
            <person name="Istrail S."/>
            <person name="Sutton G.G."/>
            <person name="Florea L."/>
            <person name="Halpern A.L."/>
            <person name="Mobarry C.M."/>
            <person name="Lippert R."/>
            <person name="Walenz B."/>
            <person name="Shatkay H."/>
            <person name="Dew I."/>
            <person name="Miller J.R."/>
            <person name="Flanigan M.J."/>
            <person name="Edwards N.J."/>
            <person name="Bolanos R."/>
            <person name="Fasulo D."/>
            <person name="Halldorsson B.V."/>
            <person name="Hannenhalli S."/>
            <person name="Turner R."/>
            <person name="Yooseph S."/>
            <person name="Lu F."/>
            <person name="Nusskern D.R."/>
            <person name="Shue B.C."/>
            <person name="Zheng X.H."/>
            <person name="Zhong F."/>
            <person name="Delcher A.L."/>
            <person name="Huson D.H."/>
            <person name="Kravitz S.A."/>
            <person name="Mouchard L."/>
            <person name="Reinert K."/>
            <person name="Remington K.A."/>
            <person name="Clark A.G."/>
            <person name="Waterman M.S."/>
            <person name="Eichler E.E."/>
            <person name="Adams M.D."/>
            <person name="Hunkapiller M.W."/>
            <person name="Myers E.W."/>
            <person name="Venter J.C."/>
        </authorList>
    </citation>
    <scope>NUCLEOTIDE SEQUENCE [LARGE SCALE GENOMIC DNA]</scope>
</reference>
<reference key="8">
    <citation type="journal article" date="2004" name="Genome Res.">
        <title>The status, quality, and expansion of the NIH full-length cDNA project: the Mammalian Gene Collection (MGC).</title>
        <authorList>
            <consortium name="The MGC Project Team"/>
        </authorList>
    </citation>
    <scope>NUCLEOTIDE SEQUENCE [LARGE SCALE MRNA] (ISOFORM 1)</scope>
    <scope>VARIANT ALA-72</scope>
    <source>
        <tissue>Testis</tissue>
    </source>
</reference>
<reference key="9">
    <citation type="journal article" date="1999" name="Science">
        <title>An activating immunoreceptor complex formed by NKG2D and DAP10.</title>
        <authorList>
            <person name="Wu J."/>
            <person name="Song Y."/>
            <person name="Bakker A.B.H."/>
            <person name="Bauer S."/>
            <person name="Spies T."/>
            <person name="Lanier L.L."/>
            <person name="Phillips J.H."/>
        </authorList>
    </citation>
    <scope>FUNCTION IN CYTOTOXICITY ACTIVATION</scope>
    <scope>INTERACTION WITH HCST</scope>
    <scope>SUBCELLULAR LOCATION</scope>
</reference>
<reference key="10">
    <citation type="journal article" date="2000" name="J. Exp. Med.">
        <title>DAP10 and DAP12 form distinct, but functionally cooperative, receptor complexes in natural killer cells.</title>
        <authorList>
            <person name="Wu J."/>
            <person name="Cherwinski H."/>
            <person name="Spies T."/>
            <person name="Phillips J.H."/>
            <person name="Lanier L.L."/>
        </authorList>
    </citation>
    <scope>INTERACTION WITH HCST</scope>
    <scope>SUBCELLULAR LOCATION</scope>
</reference>
<reference key="11">
    <citation type="journal article" date="2001" name="Nat. Immunol.">
        <title>Costimulation of CD8alphabeta T cells by NKG2D via engagement by MIC induced on virus-infected cells.</title>
        <authorList>
            <person name="Groh V."/>
            <person name="Rhinehart R."/>
            <person name="Randolph-Habecker J."/>
            <person name="Topp M.S."/>
            <person name="Riddell S.R."/>
            <person name="Spies T."/>
        </authorList>
    </citation>
    <scope>FUNCTION IN CYTOTOXICITY ACTIVATION AND VIRAL INFECTION</scope>
    <scope>FUNCTION AS A RECEPTOR FOR MICA</scope>
</reference>
<reference key="12">
    <citation type="journal article" date="2002" name="J. Immunol.">
        <title>UL16-binding proteins, novel MHC class I-related proteins, bind to NKG2D and activate multiple signaling pathways in primary NK cells.</title>
        <authorList>
            <person name="Sutherland C.L."/>
            <person name="Chalupny N.J."/>
            <person name="Schooley K."/>
            <person name="VandenBos T."/>
            <person name="Kubin M."/>
            <person name="Cosman D."/>
        </authorList>
    </citation>
    <scope>FUNCTION AS A RECEPTOR FOR MICA; MICB; ULBP1; ULBP2</scope>
    <scope>ULBP3</scope>
    <scope>INDUCTION</scope>
</reference>
<reference key="13">
    <citation type="journal article" date="2002" name="Curr. Opin. Immunol.">
        <title>Lymphocyte activation via NKG2D: towards a new paradigm in immune recognition?</title>
        <authorList>
            <person name="Vivier E."/>
            <person name="Tomasello E."/>
            <person name="Paul P."/>
        </authorList>
    </citation>
    <scope>REVIEW</scope>
    <scope>ALTERNATIVE SPLICING</scope>
</reference>
<reference key="14">
    <citation type="journal article" date="2004" name="J. Immunol.">
        <title>Two human ULBP/RAET1 molecules with transmembrane regions are ligands for NKG2D.</title>
        <authorList>
            <person name="Bacon L."/>
            <person name="Eagle R.A."/>
            <person name="Meyer M."/>
            <person name="Easom N."/>
            <person name="Young N.T."/>
            <person name="Trowsdale J."/>
        </authorList>
    </citation>
    <scope>FUNCTION IN CYTOTOXICITY ACTIVATION</scope>
    <scope>FUNCTION AS A RECEPTOR FOR RAET1E; RAET1G AND ULBP2</scope>
</reference>
<reference key="15">
    <citation type="journal article" date="2004" name="J. Immunol.">
        <title>A Structural basis for the association of DAP12 with mouse, but not human, NKG2D.</title>
        <authorList>
            <person name="Rosen D.B."/>
            <person name="Araki M."/>
            <person name="Hamerman J.A."/>
            <person name="Chen T."/>
            <person name="Yamamura T."/>
            <person name="Lanier L.L."/>
        </authorList>
    </citation>
    <scope>INTERACTION WITH HCST</scope>
    <scope>SUBCELLULAR LOCATION</scope>
    <scope>TISSUE SPECIFICITY</scope>
</reference>
<reference key="16">
    <citation type="journal article" date="2005" name="Proc. Natl. Acad. Sci. U.S.A.">
        <title>The activating NKG2D receptor assembles in the membrane with two signaling dimers into a hexameric structure.</title>
        <authorList>
            <person name="Garrity D."/>
            <person name="Call M.E."/>
            <person name="Feng J."/>
            <person name="Wucherpfennig K.W."/>
        </authorList>
    </citation>
    <scope>SUBUNIT</scope>
    <scope>MUTAGENESIS OF ARG-66</scope>
</reference>
<reference key="17">
    <citation type="journal article" date="2006" name="Nat. Med.">
        <title>Interferon-producing killer dendritic cells provide a link between innate and adaptive immunity.</title>
        <authorList>
            <person name="Chan C.W."/>
            <person name="Crafton E."/>
            <person name="Fan H.-N."/>
            <person name="Flook J."/>
            <person name="Yoshimura K."/>
            <person name="Skarica M."/>
            <person name="Brockstedt D."/>
            <person name="Dubensky T.W."/>
            <person name="Stins M.F."/>
            <person name="Lanier L.L."/>
            <person name="Pardoll D.M."/>
            <person name="Housseau F."/>
        </authorList>
    </citation>
    <scope>TISSUE SPECIFICITY</scope>
</reference>
<reference key="18">
    <citation type="journal article" date="2009" name="Eur. J. Immunol.">
        <title>ULBP6/RAET1L is an additional human NKG2D ligand.</title>
        <authorList>
            <person name="Eagle R.A."/>
            <person name="Traherne J.A."/>
            <person name="Hair J.R."/>
            <person name="Jafferji I."/>
            <person name="Trowsdale J."/>
        </authorList>
    </citation>
    <scope>INTERACTION WITH RAET1L</scope>
</reference>
<reference key="19">
    <citation type="journal article" date="2011" name="Cell. Mol. Life Sci.">
        <title>Regulation of immune cell function and differentiation by the NKG2D receptor.</title>
        <authorList>
            <person name="Zafirova B."/>
            <person name="Wensveen F.M."/>
            <person name="Gulin M."/>
            <person name="Polic B."/>
        </authorList>
    </citation>
    <scope>REVIEW</scope>
    <scope>FUNCTION</scope>
</reference>
<reference key="20">
    <citation type="journal article" date="2013" name="Annu. Rev. Immunol.">
        <title>Regulation of ligands for the NKG2D activating receptor.</title>
        <authorList>
            <person name="Raulet D.H."/>
            <person name="Gasser S."/>
            <person name="Gowen B.G."/>
            <person name="Deng W."/>
            <person name="Jung H."/>
        </authorList>
    </citation>
    <scope>REVIEW</scope>
    <scope>FUNCTION AS A RECEPTOR FOR MHC CLASS I-RELATED GLYCOPROTEINS</scope>
</reference>
<reference key="21">
    <citation type="journal article" date="2013" name="Eur. J. Immunol.">
        <title>CEACAM1 on activated NK cells inhibits NKG2D-mediated cytolytic function and signaling.</title>
        <authorList>
            <person name="Hosomi S."/>
            <person name="Chen Z."/>
            <person name="Baker K."/>
            <person name="Chen L."/>
            <person name="Huang Y.H."/>
            <person name="Olszak T."/>
            <person name="Zeissig S."/>
            <person name="Wang J.H."/>
            <person name="Mandelboim O."/>
            <person name="Beauchemin N."/>
            <person name="Lanier L.L."/>
            <person name="Blumberg R.S."/>
        </authorList>
    </citation>
    <scope>INTERACTION WITH CEACAM1</scope>
</reference>
<reference key="22">
    <citation type="journal article" date="1999" name="Science">
        <title>Activation of NK cells and T cells by NKG2D, a receptor for stress-inducible MICA.</title>
        <authorList>
            <person name="Bauer S."/>
            <person name="Groh V."/>
            <person name="Wu J."/>
            <person name="Steinle A."/>
            <person name="Phillips J.H."/>
            <person name="Lanier L.L."/>
            <person name="Spies T."/>
        </authorList>
    </citation>
    <scope>X-RAY CRYSTALLOGRAPHY (2.7 ANGSTROMS) OF 89-216 IN COMPLEX WITH MICA</scope>
    <scope>TISSUE SPECIFICITY</scope>
</reference>
<reference key="23">
    <citation type="journal article" date="2001" name="Immunity">
        <title>Conformational plasticity revealed by the cocrystal structure of NKG2D and its class I MHC-like ligand ULBP3.</title>
        <authorList>
            <person name="Radaev S."/>
            <person name="Rostro B."/>
            <person name="Brooks A.G."/>
            <person name="Colonna M."/>
            <person name="Sun P.D."/>
        </authorList>
    </citation>
    <scope>X-RAY CRYSTALLOGRAPHY (2.6 ANGSTROMS) OF 93-216 IN COMPLEX WITH ULBP3</scope>
</reference>
<reference key="24">
    <citation type="journal article" date="2003" name="Structure">
        <title>Symmetry recognizing asymmetry: analysis of the interactions between the C-type lectin-like immunoreceptor NKG2D and MHC class I-like ligands.</title>
        <authorList>
            <person name="McFarland B.J."/>
            <person name="Kortemme T."/>
            <person name="Yu S.F."/>
            <person name="Baker D."/>
            <person name="Strong R.K."/>
        </authorList>
    </citation>
    <scope>X-RAY CRYSTALLOGRAPHY (2.5 ANGSTROMS) OF 88-215</scope>
</reference>
<reference evidence="25" key="25">
    <citation type="journal article" date="2017" name="Sci. Signal.">
        <title>A disease-linked ULBP6 polymorphism inhibits NKG2D-mediated target cell killing by enhancing the stability of NKG2D ligand binding.</title>
        <authorList>
            <person name="Zuo J."/>
            <person name="Willcox C.R."/>
            <person name="Mohammed F."/>
            <person name="Davey M."/>
            <person name="Hunter S."/>
            <person name="Khan K."/>
            <person name="Antoun A."/>
            <person name="Katakia P."/>
            <person name="Croudace J."/>
            <person name="Inman C."/>
            <person name="Parry H."/>
            <person name="Briggs D."/>
            <person name="Malladi R."/>
            <person name="Willcox B.E."/>
            <person name="Moss P."/>
        </authorList>
    </citation>
    <scope>X-RAY CRYSTALLOGRAPHY (2.35 ANGSTROMS) OF 90-215 IN COMPLEX WITH RAET1L</scope>
</reference>
<evidence type="ECO:0000255" key="1"/>
<evidence type="ECO:0000255" key="2">
    <source>
        <dbReference type="PROSITE-ProRule" id="PRU00040"/>
    </source>
</evidence>
<evidence type="ECO:0000269" key="3">
    <source>
    </source>
</evidence>
<evidence type="ECO:0000269" key="4">
    <source>
    </source>
</evidence>
<evidence type="ECO:0000269" key="5">
    <source>
    </source>
</evidence>
<evidence type="ECO:0000269" key="6">
    <source>
    </source>
</evidence>
<evidence type="ECO:0000269" key="7">
    <source>
    </source>
</evidence>
<evidence type="ECO:0000269" key="8">
    <source>
    </source>
</evidence>
<evidence type="ECO:0000269" key="9">
    <source>
    </source>
</evidence>
<evidence type="ECO:0000269" key="10">
    <source>
    </source>
</evidence>
<evidence type="ECO:0000269" key="11">
    <source>
    </source>
</evidence>
<evidence type="ECO:0000269" key="12">
    <source>
    </source>
</evidence>
<evidence type="ECO:0000269" key="13">
    <source>
    </source>
</evidence>
<evidence type="ECO:0000269" key="14">
    <source>
    </source>
</evidence>
<evidence type="ECO:0000269" key="15">
    <source>
    </source>
</evidence>
<evidence type="ECO:0000269" key="16">
    <source>
    </source>
</evidence>
<evidence type="ECO:0000269" key="17">
    <source>
    </source>
</evidence>
<evidence type="ECO:0000269" key="18">
    <source>
    </source>
</evidence>
<evidence type="ECO:0000269" key="19">
    <source>
    </source>
</evidence>
<evidence type="ECO:0000269" key="20">
    <source>
    </source>
</evidence>
<evidence type="ECO:0000269" key="21">
    <source>
    </source>
</evidence>
<evidence type="ECO:0000269" key="22">
    <source ref="3"/>
</evidence>
<evidence type="ECO:0000305" key="23"/>
<evidence type="ECO:0000305" key="24">
    <source>
    </source>
</evidence>
<evidence type="ECO:0007744" key="25">
    <source>
        <dbReference type="PDB" id="4S0U"/>
    </source>
</evidence>
<evidence type="ECO:0007829" key="26">
    <source>
        <dbReference type="PDB" id="4PDC"/>
    </source>
</evidence>
<evidence type="ECO:0007829" key="27">
    <source>
        <dbReference type="PDB" id="4S0U"/>
    </source>
</evidence>
<keyword id="KW-0002">3D-structure</keyword>
<keyword id="KW-1064">Adaptive immunity</keyword>
<keyword id="KW-0025">Alternative splicing</keyword>
<keyword id="KW-1003">Cell membrane</keyword>
<keyword id="KW-0221">Differentiation</keyword>
<keyword id="KW-1015">Disulfide bond</keyword>
<keyword id="KW-0325">Glycoprotein</keyword>
<keyword id="KW-0391">Immunity</keyword>
<keyword id="KW-0399">Innate immunity</keyword>
<keyword id="KW-0430">Lectin</keyword>
<keyword id="KW-0472">Membrane</keyword>
<keyword id="KW-1267">Proteomics identification</keyword>
<keyword id="KW-0675">Receptor</keyword>
<keyword id="KW-1185">Reference proteome</keyword>
<keyword id="KW-0735">Signal-anchor</keyword>
<keyword id="KW-0812">Transmembrane</keyword>
<keyword id="KW-1133">Transmembrane helix</keyword>
<feature type="chain" id="PRO_0000046665" description="NKG2-D type II integral membrane protein">
    <location>
        <begin position="1"/>
        <end position="216"/>
    </location>
</feature>
<feature type="topological domain" description="Cytoplasmic" evidence="1">
    <location>
        <begin position="1"/>
        <end position="51"/>
    </location>
</feature>
<feature type="transmembrane region" description="Helical; Signal-anchor for type II membrane protein" evidence="1">
    <location>
        <begin position="52"/>
        <end position="72"/>
    </location>
</feature>
<feature type="topological domain" description="Extracellular" evidence="1">
    <location>
        <begin position="73"/>
        <end position="216"/>
    </location>
</feature>
<feature type="domain" description="C-type lectin" evidence="2">
    <location>
        <begin position="98"/>
        <end position="213"/>
    </location>
</feature>
<feature type="glycosylation site" description="N-linked (GlcNAc...) asparagine" evidence="1">
    <location>
        <position position="131"/>
    </location>
</feature>
<feature type="glycosylation site" description="N-linked (GlcNAc...) asparagine" evidence="1">
    <location>
        <position position="163"/>
    </location>
</feature>
<feature type="glycosylation site" description="N-linked (GlcNAc...) asparagine" evidence="1">
    <location>
        <position position="202"/>
    </location>
</feature>
<feature type="disulfide bond">
    <location>
        <begin position="96"/>
        <end position="105"/>
    </location>
</feature>
<feature type="disulfide bond">
    <location>
        <begin position="99"/>
        <end position="110"/>
    </location>
</feature>
<feature type="disulfide bond">
    <location>
        <begin position="127"/>
        <end position="211"/>
    </location>
</feature>
<feature type="disulfide bond">
    <location>
        <begin position="189"/>
        <end position="203"/>
    </location>
</feature>
<feature type="sequence variant" id="VAR_013295" description="In dbSNP:rs2255336." evidence="7 12 16 21 22">
    <original>T</original>
    <variation>A</variation>
    <location>
        <position position="72"/>
    </location>
</feature>
<feature type="sequence variant" id="VAR_030738" description="In dbSNP:rs2306182.">
    <original>N</original>
    <variation>S</variation>
    <location>
        <position position="177"/>
    </location>
</feature>
<feature type="mutagenesis site" description="Inhibits association with the HCST signaling dimer." evidence="13">
    <original>R</original>
    <variation>A</variation>
    <location>
        <position position="66"/>
    </location>
</feature>
<feature type="sequence conflict" description="In Ref. 5; BAF84709." evidence="23" ref="5">
    <original>K</original>
    <variation>R</variation>
    <location>
        <position position="186"/>
    </location>
</feature>
<feature type="strand" evidence="26">
    <location>
        <begin position="94"/>
        <end position="96"/>
    </location>
</feature>
<feature type="strand" evidence="26">
    <location>
        <begin position="103"/>
        <end position="106"/>
    </location>
</feature>
<feature type="strand" evidence="26">
    <location>
        <begin position="109"/>
        <end position="118"/>
    </location>
</feature>
<feature type="helix" evidence="26">
    <location>
        <begin position="120"/>
        <end position="128"/>
    </location>
</feature>
<feature type="turn" evidence="26">
    <location>
        <begin position="129"/>
        <end position="131"/>
    </location>
</feature>
<feature type="strand" evidence="26">
    <location>
        <begin position="133"/>
        <end position="135"/>
    </location>
</feature>
<feature type="turn" evidence="26">
    <location>
        <begin position="140"/>
        <end position="143"/>
    </location>
</feature>
<feature type="helix" evidence="26">
    <location>
        <begin position="144"/>
        <end position="148"/>
    </location>
</feature>
<feature type="strand" evidence="26">
    <location>
        <begin position="153"/>
        <end position="159"/>
    </location>
</feature>
<feature type="turn" evidence="26">
    <location>
        <begin position="161"/>
        <end position="163"/>
    </location>
</feature>
<feature type="strand" evidence="26">
    <location>
        <begin position="166"/>
        <end position="168"/>
    </location>
</feature>
<feature type="strand" evidence="27">
    <location>
        <begin position="176"/>
        <end position="178"/>
    </location>
</feature>
<feature type="strand" evidence="26">
    <location>
        <begin position="180"/>
        <end position="182"/>
    </location>
</feature>
<feature type="strand" evidence="26">
    <location>
        <begin position="185"/>
        <end position="193"/>
    </location>
</feature>
<feature type="turn" evidence="26">
    <location>
        <begin position="194"/>
        <end position="196"/>
    </location>
</feature>
<feature type="strand" evidence="26">
    <location>
        <begin position="197"/>
        <end position="201"/>
    </location>
</feature>
<feature type="strand" evidence="26">
    <location>
        <begin position="207"/>
        <end position="213"/>
    </location>
</feature>
<comment type="function">
    <text evidence="4 6 9 10 15 17 18 20">Functions as an activating and costimulatory receptor involved in immunosurveillance upon binding to various cellular stress-inducible ligands displayed at the surface of autologous tumor cells and virus-infected cells. Provides both stimulatory and costimulatory innate immune responses on activated killer (NK) cells, leading to cytotoxic activity. Acts as a costimulatory receptor for T-cell receptor (TCR) in CD8(+) T-cell-mediated adaptive immune responses by amplifying T-cell activation. Stimulates perforin-mediated elimination of ligand-expressing tumor cells. Signaling involves calcium influx, culminating in the expression of TNF-alpha. Participates in NK cell-mediated bone marrow graft rejection. May play a regulatory role in differentiation and survival of NK cells. Binds to ligands belonging to various subfamilies of MHC class I-related glycoproteins including MICA, MICB, RAET1E, RAET1G, RAET1L/ULBP6, ULBP1, ULBP2, ULBP3 (ULBP2&gt;ULBP1&gt;ULBP3) and ULBP4.</text>
</comment>
<comment type="subunit">
    <text evidence="3 4 5 8 11 13 19">Homodimer; disulfide-linked. Heterohexamer composed of two subunits of KLRK1 and four subunits of HCST/DAP10. Interacts (via transmembrane domain) with HCST/DAP10 (via transmembrane domain); the interaction is required for KLRK1 NK cell surface and induces NK cell-mediated cytotoxicity. Does not interact with TYROBP. Interacts with CEACAM1; recruits PTPN6 that dephosphorylates VAV1 (PubMed:23696226).</text>
</comment>
<comment type="interaction">
    <interactant intactId="EBI-458344">
        <id>P26718</id>
    </interactant>
    <interactant intactId="EBI-1031130">
        <id>Q29983</id>
        <label>MICA</label>
    </interactant>
    <organismsDiffer>false</organismsDiffer>
    <experiments>2</experiments>
</comment>
<comment type="interaction">
    <interactant intactId="EBI-458344">
        <id>P26718</id>
    </interactant>
    <interactant intactId="EBI-12169289">
        <id>Q08493-2</id>
        <label>PDE4C</label>
    </interactant>
    <organismsDiffer>false</organismsDiffer>
    <experiments>3</experiments>
</comment>
<comment type="interaction">
    <interactant intactId="EBI-458344">
        <id>P26718</id>
    </interactant>
    <interactant intactId="EBI-16365677">
        <id>Q8TD07</id>
        <label>RAET1E</label>
    </interactant>
    <organismsDiffer>false</organismsDiffer>
    <experiments>4</experiments>
</comment>
<comment type="interaction">
    <interactant intactId="EBI-458344">
        <id>P26718</id>
    </interactant>
    <interactant intactId="EBI-16747021">
        <id>Q8TD07-1</id>
        <label>RAET1E</label>
    </interactant>
    <organismsDiffer>false</organismsDiffer>
    <experiments>2</experiments>
</comment>
<comment type="interaction">
    <interactant intactId="EBI-458344">
        <id>P26718</id>
    </interactant>
    <interactant intactId="EBI-16417277">
        <id>Q8TD07-2</id>
        <label>RAET1E</label>
    </interactant>
    <organismsDiffer>false</organismsDiffer>
    <experiments>2</experiments>
</comment>
<comment type="interaction">
    <interactant intactId="EBI-458344">
        <id>P26718</id>
    </interactant>
    <interactant intactId="EBI-16747044">
        <id>Q8TD07-5</id>
        <label>RAET1E</label>
    </interactant>
    <organismsDiffer>false</organismsDiffer>
    <experiments>2</experiments>
</comment>
<comment type="interaction">
    <interactant intactId="EBI-458344">
        <id>P26718</id>
    </interactant>
    <interactant intactId="EBI-16747033">
        <id>Q8TD07-6</id>
        <label>RAET1E</label>
    </interactant>
    <organismsDiffer>false</organismsDiffer>
    <experiments>2</experiments>
</comment>
<comment type="interaction">
    <interactant intactId="EBI-458344">
        <id>P26718</id>
    </interactant>
    <interactant intactId="EBI-458334">
        <id>Q6H3X3</id>
        <label>RAET1G</label>
    </interactant>
    <organismsDiffer>false</organismsDiffer>
    <experiments>6</experiments>
</comment>
<comment type="interaction">
    <interactant intactId="EBI-458344">
        <id>P26718</id>
    </interactant>
    <interactant intactId="EBI-16364752">
        <id>Q5VY80</id>
        <label>RAET1L</label>
    </interactant>
    <organismsDiffer>false</organismsDiffer>
    <experiments>4</experiments>
</comment>
<comment type="interaction">
    <interactant intactId="EBI-458344">
        <id>P26718</id>
    </interactant>
    <interactant intactId="EBI-16365037">
        <id>Q9BZM6</id>
        <label>ULBP1</label>
    </interactant>
    <organismsDiffer>false</organismsDiffer>
    <experiments>2</experiments>
</comment>
<comment type="interaction">
    <interactant intactId="EBI-458344">
        <id>P26718</id>
    </interactant>
    <interactant intactId="EBI-3919993">
        <id>Q9BZM5</id>
        <label>ULBP2</label>
    </interactant>
    <organismsDiffer>false</organismsDiffer>
    <experiments>6</experiments>
</comment>
<comment type="interaction">
    <interactant intactId="EBI-458344">
        <id>P26718</id>
    </interactant>
    <interactant intactId="EBI-1032551">
        <id>Q9BZM4</id>
        <label>ULBP3</label>
    </interactant>
    <organismsDiffer>false</organismsDiffer>
    <experiments>4</experiments>
</comment>
<comment type="subcellular location">
    <subcellularLocation>
        <location evidence="4 5 11">Cell membrane</location>
        <topology evidence="4 5 11">Single-pass type II membrane protein</topology>
    </subcellularLocation>
    <text>Colocalized with HCST on the cell surface.</text>
</comment>
<comment type="alternative products">
    <event type="alternative splicing"/>
    <isoform>
        <id>P26718-1</id>
        <name>1</name>
        <sequence type="displayed"/>
    </isoform>
    <text>A number of isoforms are produced.</text>
</comment>
<comment type="tissue specificity">
    <text evidence="3 11 14">Expressed in natural killer (NK) cells, CD8(+) alpha-beta and gamma-delta T-cells. Expressed on essentially all CD56+CD3- NK cells from freshly isolated PBMC. Expressed in interferon-producing killer dendritic cells (IKDCs).</text>
</comment>
<comment type="induction">
    <text evidence="9">Up-regulated by interleukin IL15 in primary NK cells.</text>
</comment>
<comment type="miscellaneous">
    <text evidence="24">Is not capable of signal transduction by itself, but operates through the adapter protein HCST (PubMed:10426994, PubMed:15894612). Some families of ligands for human and mouse KLRK1 receptors have been characterized being very similar in structure and highly likely to be orthologs. In humans, an additional distinct subfamily of ligands (MICA and MICB) differs structurally, having an extra MHC alpha 3-like domain (PubMed:23298206).</text>
</comment>
<comment type="online information" name="Atlas of Genetics and Cytogenetics in Oncology and Haematology">
    <link uri="https://atlasgeneticsoncology.org/gene/41094/KLRK1"/>
</comment>
<comment type="online information" name="Functional Glycomics Gateway - Glycan Binding">
    <link uri="http://www.functionalglycomics.org/glycomics/GBPServlet?&amp;operationType=view&amp;cbpId=cbp_hum_Ctlect_246"/>
    <text>NKG-2D</text>
</comment>
<protein>
    <recommendedName>
        <fullName>NKG2-D type II integral membrane protein</fullName>
    </recommendedName>
    <alternativeName>
        <fullName>Killer cell lectin-like receptor subfamily K member 1</fullName>
    </alternativeName>
    <alternativeName>
        <fullName>NK cell receptor D</fullName>
    </alternativeName>
    <alternativeName>
        <fullName>NKG2-D-activating NK receptor</fullName>
    </alternativeName>
    <cdAntigenName>CD314</cdAntigenName>
</protein>
<sequence length="216" mass="25304">MGWIRGRRSRHSWEMSEFHNYNLDLKKSDFSTRWQKQRCPVVKSKCRENASPFFFCCFIAVAMGIRFIIMVTIWSAVFLNSLFNQEVQIPLTESYCGPCPKNWICYKNNCYQFFDESKNWYESQASCMSQNASLLKVYSKEDQDLLKLVKSYHWMGLVHIPTNGSWQWEDGSILSPNLLTIIEMQKGDCALYASSFKGYIENCSTPNTYICMQRTV</sequence>